<name>PHNW_BURP1</name>
<feature type="chain" id="PRO_0000286764" description="2-aminoethylphosphonate--pyruvate transaminase">
    <location>
        <begin position="1"/>
        <end position="369"/>
    </location>
</feature>
<feature type="modified residue" description="N6-(pyridoxal phosphate)lysine" evidence="1">
    <location>
        <position position="193"/>
    </location>
</feature>
<sequence>MPERDPILLTPGPLTTSRMTRDAMLRDWGSWDAAFNRLTKSVCADLVRIAGGGDAYVCVPLQGSGTFAVEATLGTLVPRDARVLVPNNGAYCARIAAILRRLGIAHVELPFAEDEPASAHAIDAALARDARLTHVALVHLETSAGLLNPLDDIAAVCRARGKALIVDAMSSFGALPIALAASGIDALISASGKCLEGVPGMGFAIVRRSALEAAEGRSPSVALDLHDQYAYMQRTSQWRFTPPTHVLAALRAALDQFFDEGGQPARGARYARNCATLVDGMRALGFEPFLDARAQASVIVTFYAPADPAYAFPAFYAAVRDAGYVLYPGKLTTADTFRVGCIGALGADEMRGAVAAIGGALESLGIAMR</sequence>
<dbReference type="EC" id="2.6.1.37" evidence="1"/>
<dbReference type="EMBL" id="CP000125">
    <property type="protein sequence ID" value="ABA53532.1"/>
    <property type="molecule type" value="Genomic_DNA"/>
</dbReference>
<dbReference type="RefSeq" id="WP_004536805.1">
    <property type="nucleotide sequence ID" value="NC_007435.1"/>
</dbReference>
<dbReference type="SMR" id="Q3JH97"/>
<dbReference type="EnsemblBacteria" id="ABA53532">
    <property type="protein sequence ID" value="ABA53532"/>
    <property type="gene ID" value="BURPS1710b_A1899"/>
</dbReference>
<dbReference type="KEGG" id="bpm:BURPS1710b_A1899"/>
<dbReference type="HOGENOM" id="CLU_027686_3_1_4"/>
<dbReference type="Proteomes" id="UP000002700">
    <property type="component" value="Chromosome II"/>
</dbReference>
<dbReference type="GO" id="GO:0047304">
    <property type="term" value="F:2-aminoethylphosphonate-pyruvate transaminase activity"/>
    <property type="evidence" value="ECO:0007669"/>
    <property type="project" value="UniProtKB-UniRule"/>
</dbReference>
<dbReference type="GO" id="GO:0019700">
    <property type="term" value="P:organic phosphonate catabolic process"/>
    <property type="evidence" value="ECO:0007669"/>
    <property type="project" value="InterPro"/>
</dbReference>
<dbReference type="Gene3D" id="3.90.1150.10">
    <property type="entry name" value="Aspartate Aminotransferase, domain 1"/>
    <property type="match status" value="1"/>
</dbReference>
<dbReference type="Gene3D" id="3.40.640.10">
    <property type="entry name" value="Type I PLP-dependent aspartate aminotransferase-like (Major domain)"/>
    <property type="match status" value="1"/>
</dbReference>
<dbReference type="HAMAP" id="MF_01376">
    <property type="entry name" value="PhnW_aminotrans_5"/>
    <property type="match status" value="1"/>
</dbReference>
<dbReference type="InterPro" id="IPR000192">
    <property type="entry name" value="Aminotrans_V_dom"/>
</dbReference>
<dbReference type="InterPro" id="IPR012703">
    <property type="entry name" value="NH2EtPonate_pyrv_transaminase"/>
</dbReference>
<dbReference type="InterPro" id="IPR015424">
    <property type="entry name" value="PyrdxlP-dep_Trfase"/>
</dbReference>
<dbReference type="InterPro" id="IPR015421">
    <property type="entry name" value="PyrdxlP-dep_Trfase_major"/>
</dbReference>
<dbReference type="InterPro" id="IPR015422">
    <property type="entry name" value="PyrdxlP-dep_Trfase_small"/>
</dbReference>
<dbReference type="InterPro" id="IPR024169">
    <property type="entry name" value="SP_NH2Trfase/AEP_transaminase"/>
</dbReference>
<dbReference type="NCBIfam" id="TIGR03301">
    <property type="entry name" value="PhnW-AepZ"/>
    <property type="match status" value="1"/>
</dbReference>
<dbReference type="NCBIfam" id="NF010006">
    <property type="entry name" value="PRK13479.1"/>
    <property type="match status" value="1"/>
</dbReference>
<dbReference type="NCBIfam" id="TIGR02326">
    <property type="entry name" value="transamin_PhnW"/>
    <property type="match status" value="1"/>
</dbReference>
<dbReference type="PANTHER" id="PTHR42778">
    <property type="entry name" value="2-AMINOETHYLPHOSPHONATE--PYRUVATE TRANSAMINASE"/>
    <property type="match status" value="1"/>
</dbReference>
<dbReference type="PANTHER" id="PTHR42778:SF1">
    <property type="entry name" value="2-AMINOETHYLPHOSPHONATE--PYRUVATE TRANSAMINASE"/>
    <property type="match status" value="1"/>
</dbReference>
<dbReference type="Pfam" id="PF00266">
    <property type="entry name" value="Aminotran_5"/>
    <property type="match status" value="1"/>
</dbReference>
<dbReference type="PIRSF" id="PIRSF000524">
    <property type="entry name" value="SPT"/>
    <property type="match status" value="1"/>
</dbReference>
<dbReference type="SUPFAM" id="SSF53383">
    <property type="entry name" value="PLP-dependent transferases"/>
    <property type="match status" value="1"/>
</dbReference>
<accession>Q3JH97</accession>
<keyword id="KW-0032">Aminotransferase</keyword>
<keyword id="KW-0663">Pyridoxal phosphate</keyword>
<keyword id="KW-0670">Pyruvate</keyword>
<keyword id="KW-0808">Transferase</keyword>
<reference key="1">
    <citation type="journal article" date="2010" name="Genome Biol. Evol.">
        <title>Continuing evolution of Burkholderia mallei through genome reduction and large-scale rearrangements.</title>
        <authorList>
            <person name="Losada L."/>
            <person name="Ronning C.M."/>
            <person name="DeShazer D."/>
            <person name="Woods D."/>
            <person name="Fedorova N."/>
            <person name="Kim H.S."/>
            <person name="Shabalina S.A."/>
            <person name="Pearson T.R."/>
            <person name="Brinkac L."/>
            <person name="Tan P."/>
            <person name="Nandi T."/>
            <person name="Crabtree J."/>
            <person name="Badger J."/>
            <person name="Beckstrom-Sternberg S."/>
            <person name="Saqib M."/>
            <person name="Schutzer S.E."/>
            <person name="Keim P."/>
            <person name="Nierman W.C."/>
        </authorList>
    </citation>
    <scope>NUCLEOTIDE SEQUENCE [LARGE SCALE GENOMIC DNA]</scope>
    <source>
        <strain>1710b</strain>
    </source>
</reference>
<gene>
    <name evidence="1" type="primary">phnW</name>
    <name type="ordered locus">BURPS1710b_A1899</name>
</gene>
<protein>
    <recommendedName>
        <fullName evidence="1">2-aminoethylphosphonate--pyruvate transaminase</fullName>
        <ecNumber evidence="1">2.6.1.37</ecNumber>
    </recommendedName>
    <alternativeName>
        <fullName evidence="1">2-aminoethylphosphonate aminotransferase</fullName>
    </alternativeName>
    <alternativeName>
        <fullName evidence="1">AEP transaminase</fullName>
        <shortName evidence="1">AEPT</shortName>
    </alternativeName>
</protein>
<evidence type="ECO:0000255" key="1">
    <source>
        <dbReference type="HAMAP-Rule" id="MF_01376"/>
    </source>
</evidence>
<evidence type="ECO:0000305" key="2"/>
<organism>
    <name type="scientific">Burkholderia pseudomallei (strain 1710b)</name>
    <dbReference type="NCBI Taxonomy" id="320372"/>
    <lineage>
        <taxon>Bacteria</taxon>
        <taxon>Pseudomonadati</taxon>
        <taxon>Pseudomonadota</taxon>
        <taxon>Betaproteobacteria</taxon>
        <taxon>Burkholderiales</taxon>
        <taxon>Burkholderiaceae</taxon>
        <taxon>Burkholderia</taxon>
        <taxon>pseudomallei group</taxon>
    </lineage>
</organism>
<proteinExistence type="inferred from homology"/>
<comment type="function">
    <text evidence="1">Involved in phosphonate degradation.</text>
</comment>
<comment type="catalytic activity">
    <reaction evidence="1">
        <text>(2-aminoethyl)phosphonate + pyruvate = phosphonoacetaldehyde + L-alanine</text>
        <dbReference type="Rhea" id="RHEA:17021"/>
        <dbReference type="ChEBI" id="CHEBI:15361"/>
        <dbReference type="ChEBI" id="CHEBI:57418"/>
        <dbReference type="ChEBI" id="CHEBI:57972"/>
        <dbReference type="ChEBI" id="CHEBI:58383"/>
        <dbReference type="EC" id="2.6.1.37"/>
    </reaction>
</comment>
<comment type="cofactor">
    <cofactor evidence="1">
        <name>pyridoxal 5'-phosphate</name>
        <dbReference type="ChEBI" id="CHEBI:597326"/>
    </cofactor>
</comment>
<comment type="subunit">
    <text evidence="1">Homodimer.</text>
</comment>
<comment type="similarity">
    <text evidence="1">Belongs to the class-V pyridoxal-phosphate-dependent aminotransferase family. PhnW subfamily.</text>
</comment>
<comment type="caution">
    <text evidence="2">The second enzyme involved in phosphonate degradation (PhnX, EC 3.11.1.1) is not found in this organism. The function of this enzyme is therefore uncertain.</text>
</comment>